<proteinExistence type="evidence at protein level"/>
<comment type="function">
    <text evidence="2 8 9 10 11 19 20 21">Calcium- and diacylglycerol-independent serine/threonine-protein kinase that functions in phosphatidylinositol 3-kinase (PI3K) pathway and mitogen-activated protein (MAP) kinase cascade, and is involved in NF-kappa-B activation, mitogenic signaling, cell proliferation, cell polarity, inflammatory response and maintenance of long-term potentiation (LTP). Upon lipopolysaccharide (LPS) treatment in macrophages, or following mitogenic stimuli, functions downstream of PI3K to activate MAP2K1/MEK1-MAPK1/ERK2 signaling cascade independently of RAF1 activation. Required for insulin-dependent activation of AKT3, but may function as an adapter rather than a direct activator. Upon insulin treatment may act as a downstream effector of PI3K and contribute to the activation of translocation of the glucose transporter SLC2A4/GLUT4 and subsequent glucose transport in adipocytes. In EGF-induced cells, binds and activates MAP2K5/MEK5-MAPK7/ERK5 independently of its kinase activity and can activate JUN promoter through MEF2C. Through binding with SQSTM1/p62, functions in interleukin-1 signaling and activation of NF-kappa-B with the specific adapters RIPK1 and TRAF6. Participates in TNF-dependent transactivation of NF-kappa-B by phosphorylating and activating IKBKB kinase, which in turn leads to the degradation of NF-kappa-B inhibitors. In migrating astrocytes, forms a cytoplasmic complex with PARD6A and is recruited by CDC42 to function in the establishment of cell polarity along with the microtubule motor and dynein. In association with FEZ1, stimulates neuronal differentiation in PC12 cells. In the inflammatory response, is required for the T-helper 2 (Th2) differentiation process, including interleukin production, efficient activation of JAK1 and the subsequent phosphorylation and nuclear translocation of STAT6. May be involved in development of allergic airway inflammation (asthma), a process dependent on Th2 immune response. In the NF-kappa-B-mediated inflammatory response, can relieve SETD6-dependent repression of NF-kappa-B target genes by phosphorylating the RELA subunit at 'Ser-311'. Phosphorylates VAMP2 in vitro (By similarity). Phosphorylates and activates LRRK1, which phosphorylates RAB proteins involved in intracellular trafficking (By similarity).</text>
</comment>
<comment type="function">
    <molecule>Isoform 2</molecule>
    <text evidence="12 17">Involved in late synaptic long term potentiation phase in CA1 hippocampal cells and long term memory maintenance.</text>
</comment>
<comment type="catalytic activity">
    <reaction evidence="18">
        <text>L-seryl-[protein] + ATP = O-phospho-L-seryl-[protein] + ADP + H(+)</text>
        <dbReference type="Rhea" id="RHEA:17989"/>
        <dbReference type="Rhea" id="RHEA-COMP:9863"/>
        <dbReference type="Rhea" id="RHEA-COMP:11604"/>
        <dbReference type="ChEBI" id="CHEBI:15378"/>
        <dbReference type="ChEBI" id="CHEBI:29999"/>
        <dbReference type="ChEBI" id="CHEBI:30616"/>
        <dbReference type="ChEBI" id="CHEBI:83421"/>
        <dbReference type="ChEBI" id="CHEBI:456216"/>
        <dbReference type="EC" id="2.7.11.13"/>
    </reaction>
</comment>
<comment type="catalytic activity">
    <reaction evidence="18">
        <text>L-threonyl-[protein] + ATP = O-phospho-L-threonyl-[protein] + ADP + H(+)</text>
        <dbReference type="Rhea" id="RHEA:46608"/>
        <dbReference type="Rhea" id="RHEA-COMP:11060"/>
        <dbReference type="Rhea" id="RHEA-COMP:11605"/>
        <dbReference type="ChEBI" id="CHEBI:15378"/>
        <dbReference type="ChEBI" id="CHEBI:30013"/>
        <dbReference type="ChEBI" id="CHEBI:30616"/>
        <dbReference type="ChEBI" id="CHEBI:61977"/>
        <dbReference type="ChEBI" id="CHEBI:456216"/>
        <dbReference type="EC" id="2.7.11.13"/>
    </reaction>
</comment>
<comment type="activity regulation">
    <text evidence="18 24">Atypical PKCs (PRKCI and PRKCZ) exhibit an elevated basal enzymatic activity (that may be due to the interaction with SMG1 or SQSTM1) and are not regulated by diacylglycerol, phosphatidylserine, phorbol esters or calcium ions. Two specific sites, Thr-410 (activation loop of the kinase domain) and Thr-560 (turn motif), need to be phosphorylated for its full activation. Phosphatidylinositol 3,4,5-trisphosphate might be a physiological activator (Probable). Isoform 2: Constitutively active (PubMed:8378304).</text>
</comment>
<comment type="subunit">
    <text evidence="2 13 14 20">Interacts with PARD6A, PARD6B and PARD6G. Part of a complex with PARD3, PARD6A or PARD6B or PARD6G and CDC42 or RAC1. Interacts with ADAP1/CENTA1 (By similarity). Forms a ternary complex with SQSTM1 and KCNAB2. Forms another ternary complex with SQSTM1 and GABRR3. Forms a complex with SQSTM1 and MAP2K5. Interacts (via the protein kinase domain) with WWC1. Forms a tripartite complex with WWC1 and DDR1, but predominantly in the absence of collagen. Component of the Par polarity complex, composed of at least phosphorylated PRKCZ, PARD3 and TIAM1. Interacts with PDPK1 (via N-terminal region). Interacts with WDFY2 (via WD repeats 1-3) (By similarity). Interacts with VAMP2 (By similarity). Forms a complex with WDFY2 and VAMP2 (By similarity). Interacts with APPL1 (By similarity). Interacts with WWC1, WWC2 and WWC3 (By similarity).</text>
</comment>
<comment type="subcellular location">
    <subcellularLocation>
        <location evidence="13 18 20">Cytoplasm</location>
    </subcellularLocation>
    <subcellularLocation>
        <location evidence="2">Endosome</location>
    </subcellularLocation>
    <subcellularLocation>
        <location evidence="2">Cell junction</location>
    </subcellularLocation>
    <subcellularLocation>
        <location evidence="18">Membrane</location>
        <topology evidence="24">Peripheral membrane protein</topology>
    </subcellularLocation>
    <text evidence="2 13 18">In the retina, localizes in the terminals of the rod bipolar cells (PubMed:12431995). Associated with endosomes (By similarity). Presence of KRIT1, CDH5 and RAP1B is required for its localization to the cell junction (By similarity). Colocalizes with VAMP2 and WDFY2 in intracellular vesicles (By similarity). Transiently translocates to the membrane of CA1 hippocampal cells in response to the induction of long term potentiation (PubMed:8378304).</text>
</comment>
<comment type="subcellular location">
    <molecule>Isoform 2</molecule>
    <subcellularLocation>
        <location evidence="18">Cytoplasm</location>
    </subcellularLocation>
</comment>
<comment type="alternative products">
    <event type="alternative promoter"/>
    <isoform>
        <id>P09217-1</id>
        <name>1</name>
        <sequence type="displayed"/>
    </isoform>
    <isoform>
        <id>P09217-2</id>
        <name>2</name>
        <name evidence="22">PKMzeta</name>
        <sequence type="described" ref="VSP_059935"/>
    </isoform>
</comment>
<comment type="tissue specificity">
    <text evidence="15 17 18">Isoform 1: In brain, expressed in hippocampus, neocortex and cerebellum (at protein level) (PubMed:12857744, PubMed:8378304). Also expressed in lung, liver, kidney, testis and to a lesser extent in pancreas, intestine and skin (at protein level) (PubMed:12857744). Isoform 2: Specifically expressed in brain where it localizes to the hippocampus, neocortex and cerebellum (at protein level) (PubMed:12857744, PubMed:27498875, PubMed:8378304).</text>
</comment>
<comment type="induction">
    <molecule>Isoform 2</molecule>
    <text evidence="15 17 18">Induced during synaptic long term potentiation.</text>
</comment>
<comment type="domain">
    <text evidence="1">The PB1 domain mediate mutually exclusive interactions with SQSTM1 and PARD6B.</text>
</comment>
<comment type="domain">
    <text evidence="20">The C1 domain does not bind the diacylglycerol (DAG).</text>
</comment>
<comment type="PTM">
    <text evidence="1">CDH5 is required for its phosphorylation at Thr-410. Phosphorylated by protein kinase PDPK1; phosphorylation is inhibited by the apoptotic C-terminal cleavage product of PKN2. Phosphorylation at Thr-410 by PI3K activates the kinase (By similarity).</text>
</comment>
<comment type="disruption phenotype">
    <molecule>Isoform 2</molecule>
    <text evidence="17">RNAi-mediated knockdown in the dorsal hippocampus impairs the late phase of long-term potentiation and the establishment of long term memory. Formation of short term memory is not affected.</text>
</comment>
<comment type="miscellaneous">
    <molecule>Isoform 2</molecule>
    <text evidence="15">Produced by alternative promoter usage.</text>
</comment>
<comment type="similarity">
    <text evidence="24">Belongs to the protein kinase superfamily. AGC Ser/Thr protein kinase family. PKC subfamily.</text>
</comment>
<comment type="caution">
    <text evidence="15 23">Isoform 2 (PKMzeta) was initially thought to be generated by proteolysis of full-length PRKCZ (PubMed:8378304). However, PKMzeta is a bona fide isoform produced by an alternative promoter in intron 4 (PubMed:12857744).</text>
</comment>
<evidence type="ECO:0000250" key="1"/>
<evidence type="ECO:0000250" key="2">
    <source>
        <dbReference type="UniProtKB" id="Q05513"/>
    </source>
</evidence>
<evidence type="ECO:0000255" key="3">
    <source>
        <dbReference type="PROSITE-ProRule" id="PRU00159"/>
    </source>
</evidence>
<evidence type="ECO:0000255" key="4">
    <source>
        <dbReference type="PROSITE-ProRule" id="PRU00226"/>
    </source>
</evidence>
<evidence type="ECO:0000255" key="5">
    <source>
        <dbReference type="PROSITE-ProRule" id="PRU00618"/>
    </source>
</evidence>
<evidence type="ECO:0000255" key="6">
    <source>
        <dbReference type="PROSITE-ProRule" id="PRU01081"/>
    </source>
</evidence>
<evidence type="ECO:0000255" key="7">
    <source>
        <dbReference type="PROSITE-ProRule" id="PRU10027"/>
    </source>
</evidence>
<evidence type="ECO:0000269" key="8">
    <source>
    </source>
</evidence>
<evidence type="ECO:0000269" key="9">
    <source>
    </source>
</evidence>
<evidence type="ECO:0000269" key="10">
    <source>
    </source>
</evidence>
<evidence type="ECO:0000269" key="11">
    <source>
    </source>
</evidence>
<evidence type="ECO:0000269" key="12">
    <source>
    </source>
</evidence>
<evidence type="ECO:0000269" key="13">
    <source>
    </source>
</evidence>
<evidence type="ECO:0000269" key="14">
    <source>
    </source>
</evidence>
<evidence type="ECO:0000269" key="15">
    <source>
    </source>
</evidence>
<evidence type="ECO:0000269" key="16">
    <source>
    </source>
</evidence>
<evidence type="ECO:0000269" key="17">
    <source>
    </source>
</evidence>
<evidence type="ECO:0000269" key="18">
    <source>
    </source>
</evidence>
<evidence type="ECO:0000269" key="19">
    <source>
    </source>
</evidence>
<evidence type="ECO:0000269" key="20">
    <source>
    </source>
</evidence>
<evidence type="ECO:0000269" key="21">
    <source>
    </source>
</evidence>
<evidence type="ECO:0000303" key="22">
    <source>
    </source>
</evidence>
<evidence type="ECO:0000303" key="23">
    <source>
    </source>
</evidence>
<evidence type="ECO:0000305" key="24"/>
<evidence type="ECO:0007744" key="25">
    <source>
    </source>
</evidence>
<evidence type="ECO:0007829" key="26">
    <source>
        <dbReference type="PDB" id="4MJS"/>
    </source>
</evidence>
<name>KPCZ_RAT</name>
<keyword id="KW-0002">3D-structure</keyword>
<keyword id="KW-0877">Alternative promoter usage</keyword>
<keyword id="KW-0067">ATP-binding</keyword>
<keyword id="KW-0965">Cell junction</keyword>
<keyword id="KW-0963">Cytoplasm</keyword>
<keyword id="KW-0967">Endosome</keyword>
<keyword id="KW-0395">Inflammatory response</keyword>
<keyword id="KW-0418">Kinase</keyword>
<keyword id="KW-0472">Membrane</keyword>
<keyword id="KW-0479">Metal-binding</keyword>
<keyword id="KW-0547">Nucleotide-binding</keyword>
<keyword id="KW-0597">Phosphoprotein</keyword>
<keyword id="KW-1185">Reference proteome</keyword>
<keyword id="KW-0723">Serine/threonine-protein kinase</keyword>
<keyword id="KW-0808">Transferase</keyword>
<keyword id="KW-0862">Zinc</keyword>
<keyword id="KW-0863">Zinc-finger</keyword>
<sequence length="592" mass="67733">MPSRTDPKMDRSGGRVRLKAHYGGDILITSVDPTTTFQDLCEEVRDMCGLHQQHPLTLKWVDSEGDPCTVSSQMELEEAFRLACQGRDEVLIIHVFPSIPEQPGMPCPGEDKSIYRRGARRWRKLYRANGHLFQAKRFNRRAYCGQCSERIWGLARQGYRCINCKLLVHKRCHVLVPLTCRRHMDSVMPSQEPPVDDKNDGVDLPSEETDGIAYISSSRKHDNIKDDSEDLKPVIDGVDGIKISQGLGLQDFDLIRVIGRGSYAKVLLVRLKKNDQIYAMKVVKKELVHDDEDIDWVQTEKHVFEQASSNPFLVGLHSCFQTTSRLFLVIEYVNGGDLMFHMQRQRKLPEEHARFYAAEICIALNFLHERGIIYRDLKLDNVLLDADGHIKLTDYGMCKEGLGPGDTTSTFCGTPNYIAPEILRGEEYGFSVDWWALGVLMFEMMAGRSPFDIITDNPDMNTEDYLFQVILEKPIRIPRFLSVKASHVLKGFLNKDPKERLGCRPQTGFSDIKSHAFFRSIDWDLLEKKQTLPPFQPQITDDYGLDNFDTQFTSEPVQLTPDDEDVIKRIDQSEFEGFEYINPLLLSAEESV</sequence>
<accession>P09217</accession>
<gene>
    <name type="primary">Prkcz</name>
    <name type="synonym">Pkcz</name>
</gene>
<organism>
    <name type="scientific">Rattus norvegicus</name>
    <name type="common">Rat</name>
    <dbReference type="NCBI Taxonomy" id="10116"/>
    <lineage>
        <taxon>Eukaryota</taxon>
        <taxon>Metazoa</taxon>
        <taxon>Chordata</taxon>
        <taxon>Craniata</taxon>
        <taxon>Vertebrata</taxon>
        <taxon>Euteleostomi</taxon>
        <taxon>Mammalia</taxon>
        <taxon>Eutheria</taxon>
        <taxon>Euarchontoglires</taxon>
        <taxon>Glires</taxon>
        <taxon>Rodentia</taxon>
        <taxon>Myomorpha</taxon>
        <taxon>Muroidea</taxon>
        <taxon>Muridae</taxon>
        <taxon>Murinae</taxon>
        <taxon>Rattus</taxon>
    </lineage>
</organism>
<protein>
    <recommendedName>
        <fullName>Protein kinase C zeta type</fullName>
        <ecNumber evidence="18">2.7.11.13</ecNumber>
    </recommendedName>
    <alternativeName>
        <fullName>nPKC-zeta</fullName>
    </alternativeName>
</protein>
<feature type="chain" id="PRO_0000055704" description="Protein kinase C zeta type">
    <location>
        <begin position="1"/>
        <end position="592"/>
    </location>
</feature>
<feature type="domain" description="PB1" evidence="6">
    <location>
        <begin position="15"/>
        <end position="98"/>
    </location>
</feature>
<feature type="domain" description="Protein kinase" evidence="3">
    <location>
        <begin position="252"/>
        <end position="518"/>
    </location>
</feature>
<feature type="domain" description="AGC-kinase C-terminal" evidence="5">
    <location>
        <begin position="519"/>
        <end position="590"/>
    </location>
</feature>
<feature type="zinc finger region" description="Phorbol-ester/DAG-type" evidence="4">
    <location>
        <begin position="130"/>
        <end position="180"/>
    </location>
</feature>
<feature type="region of interest" description="Interaction with SQSTM1">
    <location>
        <begin position="79"/>
        <end position="145"/>
    </location>
</feature>
<feature type="active site" description="Proton acceptor" evidence="3 7">
    <location>
        <position position="376"/>
    </location>
</feature>
<feature type="binding site" evidence="3">
    <location>
        <begin position="258"/>
        <end position="266"/>
    </location>
    <ligand>
        <name>ATP</name>
        <dbReference type="ChEBI" id="CHEBI:30616"/>
    </ligand>
</feature>
<feature type="binding site" evidence="3">
    <location>
        <position position="281"/>
    </location>
    <ligand>
        <name>ATP</name>
        <dbReference type="ChEBI" id="CHEBI:30616"/>
    </ligand>
</feature>
<feature type="modified residue" description="Phosphothreonine; by PDPK1 and PI3K" evidence="2">
    <location>
        <position position="410"/>
    </location>
</feature>
<feature type="modified residue" description="Phosphothreonine" evidence="16 25">
    <location>
        <position position="560"/>
    </location>
</feature>
<feature type="modified residue" description="Phosphoserine" evidence="25">
    <location>
        <position position="591"/>
    </location>
</feature>
<feature type="splice variant" id="VSP_059935" description="In isoform 2." evidence="24">
    <location>
        <begin position="1"/>
        <end position="183"/>
    </location>
</feature>
<feature type="mutagenesis site" description="Loss of interaction with SQSTM1." evidence="14">
    <original>D</original>
    <variation>A</variation>
    <location>
        <position position="62"/>
    </location>
</feature>
<feature type="sequence conflict" description="In Ref. 2; AAA41878 and 3; no nucleotide entry." evidence="24" ref="2 3">
    <original>QPGMPCPGEDK</original>
    <variation>FRAEEAAEKAE</variation>
    <location>
        <begin position="102"/>
        <end position="112"/>
    </location>
</feature>
<feature type="strand" evidence="26">
    <location>
        <begin position="15"/>
        <end position="22"/>
    </location>
</feature>
<feature type="strand" evidence="26">
    <location>
        <begin position="25"/>
        <end position="31"/>
    </location>
</feature>
<feature type="helix" evidence="26">
    <location>
        <begin position="37"/>
        <end position="47"/>
    </location>
</feature>
<feature type="strand" evidence="26">
    <location>
        <begin position="56"/>
        <end position="61"/>
    </location>
</feature>
<feature type="strand" evidence="26">
    <location>
        <begin position="67"/>
        <end position="70"/>
    </location>
</feature>
<feature type="helix" evidence="26">
    <location>
        <begin position="73"/>
        <end position="85"/>
    </location>
</feature>
<feature type="strand" evidence="26">
    <location>
        <begin position="89"/>
        <end position="97"/>
    </location>
</feature>
<reference key="1">
    <citation type="journal article" date="1989" name="Proc. Natl. Acad. Sci. U.S.A.">
        <title>Protein kinase C zeta subspecies from rat brain: its structure, expression, and properties.</title>
        <authorList>
            <person name="Ono Y."/>
            <person name="Fujii T."/>
            <person name="Ogita K."/>
            <person name="Kikkawa U."/>
            <person name="Igarashi K."/>
            <person name="Nishizuka Y."/>
        </authorList>
    </citation>
    <scope>NUCLEOTIDE SEQUENCE [MRNA] (ISOFORM 1)</scope>
    <source>
        <tissue>Brain</tissue>
    </source>
</reference>
<reference key="2">
    <citation type="journal article" date="1988" name="J. Biol. Chem.">
        <title>The structure, expression, and properties of additional members of the protein kinase C family.</title>
        <authorList>
            <person name="Ono Y."/>
            <person name="Fujii T."/>
            <person name="Ogita K."/>
            <person name="Kikkawa U."/>
            <person name="Igarashi K."/>
            <person name="Nishizuka Y."/>
        </authorList>
    </citation>
    <scope>NUCLEOTIDE SEQUENCE [MRNA] OF 101-592 (ISOFORM 1)</scope>
    <source>
        <tissue>Brain</tissue>
    </source>
</reference>
<reference key="3">
    <citation type="journal article" date="1987" name="FEBS Lett.">
        <title>Identification of three additional members of rat protein kinase C family: delta-, epsilon- and zeta-subspecies.</title>
        <authorList>
            <person name="Ono Y."/>
            <person name="Fujii T."/>
            <person name="Ogita K."/>
            <person name="Kikkawa U."/>
            <person name="Igarashi K."/>
            <person name="Nishizuka Y."/>
        </authorList>
    </citation>
    <scope>NUCLEOTIDE SEQUENCE [MRNA] OF 101-180 (ISOFORM 1)</scope>
</reference>
<reference key="4">
    <citation type="journal article" date="1993" name="Proc. Natl. Acad. Sci. U.S.A.">
        <title>Persistent activation of the zeta isoform of protein kinase C in the maintenance of long-term potentiation.</title>
        <authorList>
            <person name="Sacktor T.C."/>
            <person name="Osten P."/>
            <person name="Valsamis H."/>
            <person name="Jiang X."/>
            <person name="Naik M.U."/>
            <person name="Sublette E."/>
        </authorList>
    </citation>
    <scope>CATALYTIC ACTIVITY (ISOFORM 2)</scope>
    <scope>ACTIVITY REGULATION (ISOFORM 2)</scope>
    <scope>SUBCELLULAR LOCATION (ISOFORMS 1 AND 2)</scope>
    <scope>TISSUE SPECIFICITY (ISOFORMS 1 AND 2)</scope>
    <scope>INDUCTION (ISOFORM 2)</scope>
</reference>
<reference key="5">
    <citation type="journal article" date="1995" name="EMBO J.">
        <title>Evidence for a role of MEK and MAPK during signal transduction by protein kinase C zeta.</title>
        <authorList>
            <person name="Berra E."/>
            <person name="Diaz-Meco M.T."/>
            <person name="Lozano J."/>
            <person name="Frutos S."/>
            <person name="Municio M.M."/>
            <person name="Sanchez P."/>
            <person name="Sanz L."/>
            <person name="Moscat J."/>
        </authorList>
    </citation>
    <scope>FUNCTION IN ACTIVATION OF MAP2K1/MEK1 AND MAPK3/ERK1</scope>
</reference>
<reference key="6">
    <citation type="journal article" date="1997" name="J. Biol. Chem.">
        <title>Protein kinase C-zeta as a downstream effector of phosphatidylinositol 3-kinase during insulin stimulation in rat adipocytes. Potential role in glucose transport.</title>
        <authorList>
            <person name="Standaert M.L."/>
            <person name="Galloway L."/>
            <person name="Karnam P."/>
            <person name="Bandyopadhyay G."/>
            <person name="Moscat J."/>
            <person name="Farese R.V."/>
        </authorList>
    </citation>
    <scope>FUNCTION</scope>
</reference>
<reference key="7">
    <citation type="journal article" date="1997" name="Proc. Natl. Acad. Sci. U.S.A.">
        <title>Interaction of protein kinase C zeta with ZIP, a novel protein kinase C-binding protein.</title>
        <authorList>
            <person name="Puls A."/>
            <person name="Schmidt S."/>
            <person name="Grawe F."/>
            <person name="Stabel S."/>
        </authorList>
    </citation>
    <scope>FUNCTION</scope>
    <scope>INTERACTION WITH SQSTM1</scope>
    <scope>SUBCELLULAR LOCATION</scope>
    <scope>DOMAIN</scope>
</reference>
<reference key="8">
    <citation type="journal article" date="1999" name="Mol. Cell. Biol.">
        <title>Activation of IkappaB kinase beta by protein kinase C isoforms.</title>
        <authorList>
            <person name="Lallena M.J."/>
            <person name="Diaz-Meco M.T."/>
            <person name="Bren G."/>
            <person name="Paya C.V."/>
            <person name="Moscat J."/>
        </authorList>
    </citation>
    <scope>FUNCTION IN NF-KAPPA-B ACTIVATION</scope>
</reference>
<reference key="9">
    <citation type="journal article" date="2000" name="EMBO J.">
        <title>The atypical PKC-interacting protein p62 channels NF-kappaB activation by the IL-1-TRAF6 pathway.</title>
        <authorList>
            <person name="Sanz L."/>
            <person name="Diaz-Meco M.T."/>
            <person name="Nakano H."/>
            <person name="Moscat J."/>
        </authorList>
    </citation>
    <scope>FUNCTION IN NF-KAPPA-B ACTIVATION</scope>
</reference>
<reference key="10">
    <citation type="journal article" date="2001" name="Cell">
        <title>Integrin-mediated activation of Cdc42 controls cell polarity in migrating astrocytes through PKCzeta.</title>
        <authorList>
            <person name="Etienne-Manneville S."/>
            <person name="Hall A."/>
        </authorList>
    </citation>
    <scope>FUNCTION IN CELL POLARITY</scope>
</reference>
<reference key="11">
    <citation type="journal article" date="2001" name="Mol. Cell. Biol.">
        <title>MEK5, a new target of the atypical protein kinase C isoforms in mitogenic signaling.</title>
        <authorList>
            <person name="Diaz-Meco M.T."/>
            <person name="Moscat J."/>
        </authorList>
    </citation>
    <scope>FUNCTION IN ACTIVATION OF MAP2K5/MEK5 AND MAPK7/ERK5</scope>
</reference>
<reference key="12">
    <citation type="journal article" date="2002" name="Nat. Neurosci.">
        <title>Protein kinase Mzeta is necessary and sufficient for LTP maintenance.</title>
        <authorList>
            <person name="Ling D.S."/>
            <person name="Benardo L.S."/>
            <person name="Serrano P.A."/>
            <person name="Blace N."/>
            <person name="Kelly M.T."/>
            <person name="Crary J.F."/>
            <person name="Sacktor T.C."/>
        </authorList>
    </citation>
    <scope>FUNCTION (ISOFORM 2)</scope>
</reference>
<reference key="13">
    <citation type="journal article" date="2003" name="J. Biol. Chem.">
        <title>ZIP3, a new splice variant of the PKC-zeta-interacting protein family, binds to GABAC receptors, PKC-zeta, and Kv beta 2.</title>
        <authorList>
            <person name="Croci C."/>
            <person name="Brandstaetter J.H."/>
            <person name="Enz R."/>
        </authorList>
    </citation>
    <scope>INTERACTION WITH SQSTM1 AND GABRR3</scope>
    <scope>SUBCELLULAR LOCATION</scope>
</reference>
<reference key="14">
    <citation type="journal article" date="2003" name="J. Biol. Chem.">
        <title>Interaction codes within the family of mammalian Phox and Bem1p domain-containing proteins.</title>
        <authorList>
            <person name="Lamark T."/>
            <person name="Perander M."/>
            <person name="Outzen H."/>
            <person name="Kristiansen K."/>
            <person name="Oevervatn A."/>
            <person name="Michaelsen E."/>
            <person name="Bjoerkoey G."/>
            <person name="Johansen T."/>
        </authorList>
    </citation>
    <scope>INTERACTION WITH SQSTM1 AND MAP2K5</scope>
    <scope>MUTAGENESIS OF ASP-62</scope>
</reference>
<reference key="15">
    <citation type="journal article" date="2003" name="J. Biol. Chem.">
        <title>Protein kinase M zeta synthesis from a brain mRNA encoding an independent protein kinase C zeta catalytic domain. Implications for the molecular mechanism of memory.</title>
        <authorList>
            <person name="Hernandez A.I."/>
            <person name="Blace N."/>
            <person name="Crary J.F."/>
            <person name="Serrano P.A."/>
            <person name="Leitges M."/>
            <person name="Libien J.M."/>
            <person name="Weinstein G."/>
            <person name="Tcherapanov A."/>
            <person name="Sacktor T.C."/>
        </authorList>
    </citation>
    <scope>TISSUE SPECIFICITY (ISOFORMS 1 AND 2)</scope>
    <scope>INDUCTION (ISOFORM 2)</scope>
    <scope>ALTERNATIVE PROMOTER USAGE (ISOFORM 2)</scope>
</reference>
<reference key="16">
    <citation type="journal article" date="2004" name="Biochem. J.">
        <title>Molecular mechanisms regulating protein kinase Czeta turnover and cellular transformation.</title>
        <authorList>
            <person name="Le Good J.A."/>
            <person name="Brindley D.N."/>
        </authorList>
    </citation>
    <scope>PHOSPHORYLATION AT THR-410 AND THR-560</scope>
</reference>
<reference key="17">
    <citation type="journal article" date="2012" name="Nat. Commun.">
        <title>Quantitative maps of protein phosphorylation sites across 14 different rat organs and tissues.</title>
        <authorList>
            <person name="Lundby A."/>
            <person name="Secher A."/>
            <person name="Lage K."/>
            <person name="Nordsborg N.B."/>
            <person name="Dmytriyev A."/>
            <person name="Lundby C."/>
            <person name="Olsen J.V."/>
        </authorList>
    </citation>
    <scope>PHOSPHORYLATION [LARGE SCALE ANALYSIS] AT THR-560 AND SER-591</scope>
    <scope>IDENTIFICATION BY MASS SPECTROMETRY [LARGE SCALE ANALYSIS]</scope>
</reference>
<reference key="18">
    <citation type="journal article" date="2016" name="Cell Rep.">
        <title>Distinct Roles of PKCiota/lambda and PKMzeta in the Initiation and Maintenance of Hippocampal Long-Term Potentiation and Memory.</title>
        <authorList>
            <person name="Wang S."/>
            <person name="Sheng T."/>
            <person name="Ren S."/>
            <person name="Tian T."/>
            <person name="Lu W."/>
        </authorList>
    </citation>
    <scope>FUNCTION (ISOFORM 2)</scope>
    <scope>TISSUE SPECIFICITY (ISOFORM 2)</scope>
    <scope>INDUCTION (ISOFORM 2)</scope>
    <scope>DISRUPTION PHENOTYPE (ISOFORM 2)</scope>
</reference>
<dbReference type="EC" id="2.7.11.13" evidence="18"/>
<dbReference type="EMBL" id="J04532">
    <property type="protein sequence ID" value="AAA41934.1"/>
    <property type="molecule type" value="mRNA"/>
</dbReference>
<dbReference type="EMBL" id="M18332">
    <property type="protein sequence ID" value="AAA41878.1"/>
    <property type="molecule type" value="mRNA"/>
</dbReference>
<dbReference type="PIR" id="A30314">
    <property type="entry name" value="A30314"/>
</dbReference>
<dbReference type="RefSeq" id="NP_001416352.1">
    <molecule id="P09217-2"/>
    <property type="nucleotide sequence ID" value="NM_001429423.1"/>
</dbReference>
<dbReference type="RefSeq" id="NP_001416353.1">
    <molecule id="P09217-2"/>
    <property type="nucleotide sequence ID" value="NM_001429424.1"/>
</dbReference>
<dbReference type="RefSeq" id="NP_071952.1">
    <molecule id="P09217-1"/>
    <property type="nucleotide sequence ID" value="NM_022507.2"/>
</dbReference>
<dbReference type="PDB" id="4MJS">
    <property type="method" value="X-ray"/>
    <property type="resolution" value="2.50 A"/>
    <property type="chains" value="A/C/E/G/I/K/M/O/Q/S/U/W=15-101"/>
</dbReference>
<dbReference type="PDBsum" id="4MJS"/>
<dbReference type="SMR" id="P09217"/>
<dbReference type="BioGRID" id="247554">
    <property type="interactions" value="20"/>
</dbReference>
<dbReference type="CORUM" id="P09217"/>
<dbReference type="DIP" id="DIP-40867N"/>
<dbReference type="FunCoup" id="P09217">
    <property type="interactions" value="2272"/>
</dbReference>
<dbReference type="IntAct" id="P09217">
    <property type="interactions" value="5"/>
</dbReference>
<dbReference type="MINT" id="P09217"/>
<dbReference type="STRING" id="10116.ENSRNOP00000021285"/>
<dbReference type="BindingDB" id="P09217"/>
<dbReference type="ChEMBL" id="CHEMBL2094266"/>
<dbReference type="DrugCentral" id="P09217"/>
<dbReference type="GlyGen" id="P09217">
    <property type="glycosylation" value="3 sites, 1 O-linked glycan (3 sites)"/>
</dbReference>
<dbReference type="iPTMnet" id="P09217"/>
<dbReference type="PhosphoSitePlus" id="P09217"/>
<dbReference type="PaxDb" id="10116-ENSRNOP00000021285"/>
<dbReference type="Ensembl" id="ENSRNOT00000021285.7">
    <molecule id="P09217-1"/>
    <property type="protein sequence ID" value="ENSRNOP00000021285.5"/>
    <property type="gene ID" value="ENSRNOG00000015480.8"/>
</dbReference>
<dbReference type="GeneID" id="25522"/>
<dbReference type="KEGG" id="rno:25522"/>
<dbReference type="AGR" id="RGD:3399"/>
<dbReference type="CTD" id="5590"/>
<dbReference type="RGD" id="3399">
    <property type="gene designation" value="Prkcz"/>
</dbReference>
<dbReference type="eggNOG" id="KOG0695">
    <property type="taxonomic scope" value="Eukaryota"/>
</dbReference>
<dbReference type="GeneTree" id="ENSGT00940000153497"/>
<dbReference type="HOGENOM" id="CLU_000288_63_29_1"/>
<dbReference type="InParanoid" id="P09217"/>
<dbReference type="OMA" id="DKMAGLC"/>
<dbReference type="PhylomeDB" id="P09217"/>
<dbReference type="BRENDA" id="2.7.11.13">
    <property type="organism ID" value="5301"/>
</dbReference>
<dbReference type="Reactome" id="R-RNO-2173791">
    <property type="pathway name" value="TGF-beta receptor signaling in EMT (epithelial to mesenchymal transition)"/>
</dbReference>
<dbReference type="Reactome" id="R-RNO-5218921">
    <property type="pathway name" value="VEGFR2 mediated cell proliferation"/>
</dbReference>
<dbReference type="Reactome" id="R-RNO-5668599">
    <property type="pathway name" value="RHO GTPases Activate NADPH Oxidases"/>
</dbReference>
<dbReference type="Reactome" id="R-RNO-9634635">
    <property type="pathway name" value="Estrogen-stimulated signaling through PRKCZ"/>
</dbReference>
<dbReference type="EvolutionaryTrace" id="P09217"/>
<dbReference type="PRO" id="PR:P09217"/>
<dbReference type="Proteomes" id="UP000002494">
    <property type="component" value="Chromosome 5"/>
</dbReference>
<dbReference type="Bgee" id="ENSRNOG00000015480">
    <property type="expression patterns" value="Expressed in frontal cortex and 20 other cell types or tissues"/>
</dbReference>
<dbReference type="GO" id="GO:0045179">
    <property type="term" value="C:apical cortex"/>
    <property type="evidence" value="ECO:0000266"/>
    <property type="project" value="RGD"/>
</dbReference>
<dbReference type="GO" id="GO:0016324">
    <property type="term" value="C:apical plasma membrane"/>
    <property type="evidence" value="ECO:0000266"/>
    <property type="project" value="RGD"/>
</dbReference>
<dbReference type="GO" id="GO:0043203">
    <property type="term" value="C:axon hillock"/>
    <property type="evidence" value="ECO:0000266"/>
    <property type="project" value="RGD"/>
</dbReference>
<dbReference type="GO" id="GO:0005923">
    <property type="term" value="C:bicellular tight junction"/>
    <property type="evidence" value="ECO:0000266"/>
    <property type="project" value="RGD"/>
</dbReference>
<dbReference type="GO" id="GO:0005938">
    <property type="term" value="C:cell cortex"/>
    <property type="evidence" value="ECO:0000266"/>
    <property type="project" value="RGD"/>
</dbReference>
<dbReference type="GO" id="GO:0031252">
    <property type="term" value="C:cell leading edge"/>
    <property type="evidence" value="ECO:0000314"/>
    <property type="project" value="RGD"/>
</dbReference>
<dbReference type="GO" id="GO:0005911">
    <property type="term" value="C:cell-cell junction"/>
    <property type="evidence" value="ECO:0000250"/>
    <property type="project" value="UniProtKB"/>
</dbReference>
<dbReference type="GO" id="GO:0005737">
    <property type="term" value="C:cytoplasm"/>
    <property type="evidence" value="ECO:0000266"/>
    <property type="project" value="RGD"/>
</dbReference>
<dbReference type="GO" id="GO:0005829">
    <property type="term" value="C:cytosol"/>
    <property type="evidence" value="ECO:0000304"/>
    <property type="project" value="Reactome"/>
</dbReference>
<dbReference type="GO" id="GO:0005768">
    <property type="term" value="C:endosome"/>
    <property type="evidence" value="ECO:0007669"/>
    <property type="project" value="UniProtKB-SubCell"/>
</dbReference>
<dbReference type="GO" id="GO:0098978">
    <property type="term" value="C:glutamatergic synapse"/>
    <property type="evidence" value="ECO:0000314"/>
    <property type="project" value="SynGO"/>
</dbReference>
<dbReference type="GO" id="GO:0005815">
    <property type="term" value="C:microtubule organizing center"/>
    <property type="evidence" value="ECO:0000266"/>
    <property type="project" value="RGD"/>
</dbReference>
<dbReference type="GO" id="GO:0035748">
    <property type="term" value="C:myelin sheath abaxonal region"/>
    <property type="evidence" value="ECO:0000266"/>
    <property type="project" value="RGD"/>
</dbReference>
<dbReference type="GO" id="GO:0005635">
    <property type="term" value="C:nuclear envelope"/>
    <property type="evidence" value="ECO:0000266"/>
    <property type="project" value="RGD"/>
</dbReference>
<dbReference type="GO" id="GO:0016363">
    <property type="term" value="C:nuclear matrix"/>
    <property type="evidence" value="ECO:0000266"/>
    <property type="project" value="RGD"/>
</dbReference>
<dbReference type="GO" id="GO:0005634">
    <property type="term" value="C:nucleus"/>
    <property type="evidence" value="ECO:0000266"/>
    <property type="project" value="RGD"/>
</dbReference>
<dbReference type="GO" id="GO:0048471">
    <property type="term" value="C:perinuclear region of cytoplasm"/>
    <property type="evidence" value="ECO:0000314"/>
    <property type="project" value="RGD"/>
</dbReference>
<dbReference type="GO" id="GO:0005886">
    <property type="term" value="C:plasma membrane"/>
    <property type="evidence" value="ECO:0000314"/>
    <property type="project" value="UniProtKB"/>
</dbReference>
<dbReference type="GO" id="GO:0014069">
    <property type="term" value="C:postsynaptic density"/>
    <property type="evidence" value="ECO:0000314"/>
    <property type="project" value="SynGO"/>
</dbReference>
<dbReference type="GO" id="GO:0098685">
    <property type="term" value="C:Schaffer collateral - CA1 synapse"/>
    <property type="evidence" value="ECO:0000314"/>
    <property type="project" value="SynGO"/>
</dbReference>
<dbReference type="GO" id="GO:0001725">
    <property type="term" value="C:stress fiber"/>
    <property type="evidence" value="ECO:0000314"/>
    <property type="project" value="RGD"/>
</dbReference>
<dbReference type="GO" id="GO:0031982">
    <property type="term" value="C:vesicle"/>
    <property type="evidence" value="ECO:0000266"/>
    <property type="project" value="RGD"/>
</dbReference>
<dbReference type="GO" id="GO:0071889">
    <property type="term" value="F:14-3-3 protein binding"/>
    <property type="evidence" value="ECO:0000353"/>
    <property type="project" value="RGD"/>
</dbReference>
<dbReference type="GO" id="GO:0005524">
    <property type="term" value="F:ATP binding"/>
    <property type="evidence" value="ECO:0007669"/>
    <property type="project" value="UniProtKB-KW"/>
</dbReference>
<dbReference type="GO" id="GO:0004697">
    <property type="term" value="F:diacylglycerol-dependent serine/threonine kinase activity"/>
    <property type="evidence" value="ECO:0000266"/>
    <property type="project" value="RGD"/>
</dbReference>
<dbReference type="GO" id="GO:0043274">
    <property type="term" value="F:phospholipase binding"/>
    <property type="evidence" value="ECO:0000353"/>
    <property type="project" value="RGD"/>
</dbReference>
<dbReference type="GO" id="GO:0015459">
    <property type="term" value="F:potassium channel regulator activity"/>
    <property type="evidence" value="ECO:0000315"/>
    <property type="project" value="RGD"/>
</dbReference>
<dbReference type="GO" id="GO:0004672">
    <property type="term" value="F:protein kinase activity"/>
    <property type="evidence" value="ECO:0000266"/>
    <property type="project" value="RGD"/>
</dbReference>
<dbReference type="GO" id="GO:0019901">
    <property type="term" value="F:protein kinase binding"/>
    <property type="evidence" value="ECO:0000353"/>
    <property type="project" value="RGD"/>
</dbReference>
<dbReference type="GO" id="GO:0106310">
    <property type="term" value="F:protein serine kinase activity"/>
    <property type="evidence" value="ECO:0007669"/>
    <property type="project" value="RHEA"/>
</dbReference>
<dbReference type="GO" id="GO:0004674">
    <property type="term" value="F:protein serine/threonine kinase activity"/>
    <property type="evidence" value="ECO:0000314"/>
    <property type="project" value="RGD"/>
</dbReference>
<dbReference type="GO" id="GO:0044877">
    <property type="term" value="F:protein-containing complex binding"/>
    <property type="evidence" value="ECO:0000353"/>
    <property type="project" value="RGD"/>
</dbReference>
<dbReference type="GO" id="GO:0008270">
    <property type="term" value="F:zinc ion binding"/>
    <property type="evidence" value="ECO:0007669"/>
    <property type="project" value="UniProtKB-KW"/>
</dbReference>
<dbReference type="GO" id="GO:0016477">
    <property type="term" value="P:cell migration"/>
    <property type="evidence" value="ECO:0000315"/>
    <property type="project" value="RGD"/>
</dbReference>
<dbReference type="GO" id="GO:0007166">
    <property type="term" value="P:cell surface receptor signaling pathway"/>
    <property type="evidence" value="ECO:0000315"/>
    <property type="project" value="RGD"/>
</dbReference>
<dbReference type="GO" id="GO:0032869">
    <property type="term" value="P:cellular response to insulin stimulus"/>
    <property type="evidence" value="ECO:0000315"/>
    <property type="project" value="RGD"/>
</dbReference>
<dbReference type="GO" id="GO:0030010">
    <property type="term" value="P:establishment of cell polarity"/>
    <property type="evidence" value="ECO:0000315"/>
    <property type="project" value="UniProtKB"/>
</dbReference>
<dbReference type="GO" id="GO:0006954">
    <property type="term" value="P:inflammatory response"/>
    <property type="evidence" value="ECO:0007669"/>
    <property type="project" value="UniProtKB-KW"/>
</dbReference>
<dbReference type="GO" id="GO:0035556">
    <property type="term" value="P:intracellular signal transduction"/>
    <property type="evidence" value="ECO:0000314"/>
    <property type="project" value="RGD"/>
</dbReference>
<dbReference type="GO" id="GO:0007616">
    <property type="term" value="P:long-term memory"/>
    <property type="evidence" value="ECO:0000315"/>
    <property type="project" value="RGD"/>
</dbReference>
<dbReference type="GO" id="GO:0060291">
    <property type="term" value="P:long-term synaptic potentiation"/>
    <property type="evidence" value="ECO:0000315"/>
    <property type="project" value="UniProtKB"/>
</dbReference>
<dbReference type="GO" id="GO:0051899">
    <property type="term" value="P:membrane depolarization"/>
    <property type="evidence" value="ECO:0000315"/>
    <property type="project" value="RGD"/>
</dbReference>
<dbReference type="GO" id="GO:0060081">
    <property type="term" value="P:membrane hyperpolarization"/>
    <property type="evidence" value="ECO:0000315"/>
    <property type="project" value="RGD"/>
</dbReference>
<dbReference type="GO" id="GO:0000226">
    <property type="term" value="P:microtubule cytoskeleton organization"/>
    <property type="evidence" value="ECO:0000266"/>
    <property type="project" value="RGD"/>
</dbReference>
<dbReference type="GO" id="GO:0043066">
    <property type="term" value="P:negative regulation of apoptotic process"/>
    <property type="evidence" value="ECO:0000314"/>
    <property type="project" value="RGD"/>
</dbReference>
<dbReference type="GO" id="GO:0046627">
    <property type="term" value="P:negative regulation of insulin receptor signaling pathway"/>
    <property type="evidence" value="ECO:0000266"/>
    <property type="project" value="RGD"/>
</dbReference>
<dbReference type="GO" id="GO:0031333">
    <property type="term" value="P:negative regulation of protein-containing complex assembly"/>
    <property type="evidence" value="ECO:0000266"/>
    <property type="project" value="RGD"/>
</dbReference>
<dbReference type="GO" id="GO:1990138">
    <property type="term" value="P:neuron projection extension"/>
    <property type="evidence" value="ECO:0000266"/>
    <property type="project" value="RGD"/>
</dbReference>
<dbReference type="GO" id="GO:0008284">
    <property type="term" value="P:positive regulation of cell population proliferation"/>
    <property type="evidence" value="ECO:0000315"/>
    <property type="project" value="RGD"/>
</dbReference>
<dbReference type="GO" id="GO:0001954">
    <property type="term" value="P:positive regulation of cell-matrix adhesion"/>
    <property type="evidence" value="ECO:0000315"/>
    <property type="project" value="RGD"/>
</dbReference>
<dbReference type="GO" id="GO:0070374">
    <property type="term" value="P:positive regulation of ERK1 and ERK2 cascade"/>
    <property type="evidence" value="ECO:0000315"/>
    <property type="project" value="UniProtKB"/>
</dbReference>
<dbReference type="GO" id="GO:2000463">
    <property type="term" value="P:positive regulation of excitatory postsynaptic potential"/>
    <property type="evidence" value="ECO:0000314"/>
    <property type="project" value="UniProtKB"/>
</dbReference>
<dbReference type="GO" id="GO:0046628">
    <property type="term" value="P:positive regulation of insulin receptor signaling pathway"/>
    <property type="evidence" value="ECO:0000315"/>
    <property type="project" value="UniProtKB"/>
</dbReference>
<dbReference type="GO" id="GO:0032733">
    <property type="term" value="P:positive regulation of interleukin-10 production"/>
    <property type="evidence" value="ECO:0000250"/>
    <property type="project" value="UniProtKB"/>
</dbReference>
<dbReference type="GO" id="GO:0032736">
    <property type="term" value="P:positive regulation of interleukin-13 production"/>
    <property type="evidence" value="ECO:0000250"/>
    <property type="project" value="UniProtKB"/>
</dbReference>
<dbReference type="GO" id="GO:0032753">
    <property type="term" value="P:positive regulation of interleukin-4 production"/>
    <property type="evidence" value="ECO:0000250"/>
    <property type="project" value="UniProtKB"/>
</dbReference>
<dbReference type="GO" id="GO:0032754">
    <property type="term" value="P:positive regulation of interleukin-5 production"/>
    <property type="evidence" value="ECO:0000250"/>
    <property type="project" value="UniProtKB"/>
</dbReference>
<dbReference type="GO" id="GO:0051092">
    <property type="term" value="P:positive regulation of NF-kappaB transcription factor activity"/>
    <property type="evidence" value="ECO:0000315"/>
    <property type="project" value="UniProtKB"/>
</dbReference>
<dbReference type="GO" id="GO:0051222">
    <property type="term" value="P:positive regulation of protein transport"/>
    <property type="evidence" value="ECO:0000315"/>
    <property type="project" value="RGD"/>
</dbReference>
<dbReference type="GO" id="GO:0050806">
    <property type="term" value="P:positive regulation of synaptic transmission"/>
    <property type="evidence" value="ECO:0000315"/>
    <property type="project" value="RGD"/>
</dbReference>
<dbReference type="GO" id="GO:2000553">
    <property type="term" value="P:positive regulation of T-helper 2 cell cytokine production"/>
    <property type="evidence" value="ECO:0000250"/>
    <property type="project" value="UniProtKB"/>
</dbReference>
<dbReference type="GO" id="GO:0045630">
    <property type="term" value="P:positive regulation of T-helper 2 cell differentiation"/>
    <property type="evidence" value="ECO:0000250"/>
    <property type="project" value="UniProtKB"/>
</dbReference>
<dbReference type="GO" id="GO:0072659">
    <property type="term" value="P:protein localization to plasma membrane"/>
    <property type="evidence" value="ECO:0000266"/>
    <property type="project" value="RGD"/>
</dbReference>
<dbReference type="GO" id="GO:0098696">
    <property type="term" value="P:regulation of neurotransmitter receptor localization to postsynaptic specialization membrane"/>
    <property type="evidence" value="ECO:0000314"/>
    <property type="project" value="SynGO"/>
</dbReference>
<dbReference type="GO" id="GO:0047496">
    <property type="term" value="P:vesicle transport along microtubule"/>
    <property type="evidence" value="ECO:0000315"/>
    <property type="project" value="RGD"/>
</dbReference>
<dbReference type="CDD" id="cd21095">
    <property type="entry name" value="C1_aPKC_zeta"/>
    <property type="match status" value="1"/>
</dbReference>
<dbReference type="CDD" id="cd06404">
    <property type="entry name" value="PB1_aPKC"/>
    <property type="match status" value="1"/>
</dbReference>
<dbReference type="FunFam" id="1.10.510.10:FF:000048">
    <property type="entry name" value="Protein kinase C"/>
    <property type="match status" value="1"/>
</dbReference>
<dbReference type="FunFam" id="3.10.20.90:FF:000071">
    <property type="entry name" value="Protein kinase C"/>
    <property type="match status" value="1"/>
</dbReference>
<dbReference type="FunFam" id="3.30.200.20:FF:000070">
    <property type="entry name" value="Protein kinase C"/>
    <property type="match status" value="1"/>
</dbReference>
<dbReference type="FunFam" id="3.30.60.20:FF:000012">
    <property type="entry name" value="Protein kinase C"/>
    <property type="match status" value="1"/>
</dbReference>
<dbReference type="Gene3D" id="3.30.60.20">
    <property type="match status" value="1"/>
</dbReference>
<dbReference type="Gene3D" id="3.10.20.90">
    <property type="entry name" value="Phosphatidylinositol 3-kinase Catalytic Subunit, Chain A, domain 1"/>
    <property type="match status" value="1"/>
</dbReference>
<dbReference type="Gene3D" id="3.30.200.20">
    <property type="entry name" value="Phosphorylase Kinase, domain 1"/>
    <property type="match status" value="1"/>
</dbReference>
<dbReference type="Gene3D" id="1.10.510.10">
    <property type="entry name" value="Transferase(Phosphotransferase) domain 1"/>
    <property type="match status" value="1"/>
</dbReference>
<dbReference type="InterPro" id="IPR000961">
    <property type="entry name" value="AGC-kinase_C"/>
</dbReference>
<dbReference type="InterPro" id="IPR046349">
    <property type="entry name" value="C1-like_sf"/>
</dbReference>
<dbReference type="InterPro" id="IPR047314">
    <property type="entry name" value="C1_aPKC_zeta"/>
</dbReference>
<dbReference type="InterPro" id="IPR020454">
    <property type="entry name" value="DAG/PE-bd"/>
</dbReference>
<dbReference type="InterPro" id="IPR011009">
    <property type="entry name" value="Kinase-like_dom_sf"/>
</dbReference>
<dbReference type="InterPro" id="IPR053793">
    <property type="entry name" value="PB1-like"/>
</dbReference>
<dbReference type="InterPro" id="IPR034877">
    <property type="entry name" value="PB1_aPKC"/>
</dbReference>
<dbReference type="InterPro" id="IPR000270">
    <property type="entry name" value="PB1_dom"/>
</dbReference>
<dbReference type="InterPro" id="IPR002219">
    <property type="entry name" value="PE/DAG-bd"/>
</dbReference>
<dbReference type="InterPro" id="IPR012233">
    <property type="entry name" value="PKC"/>
</dbReference>
<dbReference type="InterPro" id="IPR017892">
    <property type="entry name" value="Pkinase_C"/>
</dbReference>
<dbReference type="InterPro" id="IPR000719">
    <property type="entry name" value="Prot_kinase_dom"/>
</dbReference>
<dbReference type="InterPro" id="IPR017441">
    <property type="entry name" value="Protein_kinase_ATP_BS"/>
</dbReference>
<dbReference type="InterPro" id="IPR008271">
    <property type="entry name" value="Ser/Thr_kinase_AS"/>
</dbReference>
<dbReference type="PANTHER" id="PTHR24351">
    <property type="entry name" value="RIBOSOMAL PROTEIN S6 KINASE"/>
    <property type="match status" value="1"/>
</dbReference>
<dbReference type="Pfam" id="PF00130">
    <property type="entry name" value="C1_1"/>
    <property type="match status" value="1"/>
</dbReference>
<dbReference type="Pfam" id="PF00564">
    <property type="entry name" value="PB1"/>
    <property type="match status" value="1"/>
</dbReference>
<dbReference type="Pfam" id="PF00069">
    <property type="entry name" value="Pkinase"/>
    <property type="match status" value="1"/>
</dbReference>
<dbReference type="Pfam" id="PF00433">
    <property type="entry name" value="Pkinase_C"/>
    <property type="match status" value="1"/>
</dbReference>
<dbReference type="PIRSF" id="PIRSF000554">
    <property type="entry name" value="PKC_zeta"/>
    <property type="match status" value="1"/>
</dbReference>
<dbReference type="PRINTS" id="PR00008">
    <property type="entry name" value="DAGPEDOMAIN"/>
</dbReference>
<dbReference type="SMART" id="SM00109">
    <property type="entry name" value="C1"/>
    <property type="match status" value="1"/>
</dbReference>
<dbReference type="SMART" id="SM00666">
    <property type="entry name" value="PB1"/>
    <property type="match status" value="1"/>
</dbReference>
<dbReference type="SMART" id="SM00133">
    <property type="entry name" value="S_TK_X"/>
    <property type="match status" value="1"/>
</dbReference>
<dbReference type="SMART" id="SM00220">
    <property type="entry name" value="S_TKc"/>
    <property type="match status" value="1"/>
</dbReference>
<dbReference type="SUPFAM" id="SSF54277">
    <property type="entry name" value="CAD &amp; PB1 domains"/>
    <property type="match status" value="1"/>
</dbReference>
<dbReference type="SUPFAM" id="SSF57889">
    <property type="entry name" value="Cysteine-rich domain"/>
    <property type="match status" value="1"/>
</dbReference>
<dbReference type="SUPFAM" id="SSF56112">
    <property type="entry name" value="Protein kinase-like (PK-like)"/>
    <property type="match status" value="1"/>
</dbReference>
<dbReference type="PROSITE" id="PS51285">
    <property type="entry name" value="AGC_KINASE_CTER"/>
    <property type="match status" value="1"/>
</dbReference>
<dbReference type="PROSITE" id="PS51745">
    <property type="entry name" value="PB1"/>
    <property type="match status" value="1"/>
</dbReference>
<dbReference type="PROSITE" id="PS00107">
    <property type="entry name" value="PROTEIN_KINASE_ATP"/>
    <property type="match status" value="1"/>
</dbReference>
<dbReference type="PROSITE" id="PS50011">
    <property type="entry name" value="PROTEIN_KINASE_DOM"/>
    <property type="match status" value="1"/>
</dbReference>
<dbReference type="PROSITE" id="PS00108">
    <property type="entry name" value="PROTEIN_KINASE_ST"/>
    <property type="match status" value="1"/>
</dbReference>
<dbReference type="PROSITE" id="PS00479">
    <property type="entry name" value="ZF_DAG_PE_1"/>
    <property type="match status" value="1"/>
</dbReference>
<dbReference type="PROSITE" id="PS50081">
    <property type="entry name" value="ZF_DAG_PE_2"/>
    <property type="match status" value="1"/>
</dbReference>